<keyword id="KW-0054">Arabinose catabolism</keyword>
<keyword id="KW-0119">Carbohydrate metabolism</keyword>
<keyword id="KW-0413">Isomerase</keyword>
<keyword id="KW-0464">Manganese</keyword>
<keyword id="KW-0479">Metal-binding</keyword>
<keyword id="KW-1185">Reference proteome</keyword>
<comment type="function">
    <text evidence="1">Catalyzes the conversion of L-arabinose to L-ribulose.</text>
</comment>
<comment type="catalytic activity">
    <reaction evidence="1">
        <text>beta-L-arabinopyranose = L-ribulose</text>
        <dbReference type="Rhea" id="RHEA:14821"/>
        <dbReference type="ChEBI" id="CHEBI:16880"/>
        <dbReference type="ChEBI" id="CHEBI:40886"/>
        <dbReference type="EC" id="5.3.1.4"/>
    </reaction>
</comment>
<comment type="cofactor">
    <cofactor evidence="1">
        <name>Mn(2+)</name>
        <dbReference type="ChEBI" id="CHEBI:29035"/>
    </cofactor>
    <text evidence="1">Binds 1 Mn(2+) ion per subunit.</text>
</comment>
<comment type="pathway">
    <text evidence="1">Carbohydrate degradation; L-arabinose degradation via L-ribulose; D-xylulose 5-phosphate from L-arabinose (bacterial route): step 1/3.</text>
</comment>
<comment type="similarity">
    <text evidence="1">Belongs to the arabinose isomerase family.</text>
</comment>
<gene>
    <name evidence="1" type="primary">araA</name>
    <name type="ordered locus">Sde_0774</name>
</gene>
<organism>
    <name type="scientific">Saccharophagus degradans (strain 2-40 / ATCC 43961 / DSM 17024)</name>
    <dbReference type="NCBI Taxonomy" id="203122"/>
    <lineage>
        <taxon>Bacteria</taxon>
        <taxon>Pseudomonadati</taxon>
        <taxon>Pseudomonadota</taxon>
        <taxon>Gammaproteobacteria</taxon>
        <taxon>Cellvibrionales</taxon>
        <taxon>Cellvibrionaceae</taxon>
        <taxon>Saccharophagus</taxon>
    </lineage>
</organism>
<protein>
    <recommendedName>
        <fullName evidence="1">L-arabinose isomerase</fullName>
        <ecNumber evidence="1">5.3.1.4</ecNumber>
    </recommendedName>
</protein>
<dbReference type="EC" id="5.3.1.4" evidence="1"/>
<dbReference type="EMBL" id="CP000282">
    <property type="protein sequence ID" value="ABD80036.1"/>
    <property type="molecule type" value="Genomic_DNA"/>
</dbReference>
<dbReference type="RefSeq" id="WP_011467257.1">
    <property type="nucleotide sequence ID" value="NC_007912.1"/>
</dbReference>
<dbReference type="SMR" id="Q21MP3"/>
<dbReference type="STRING" id="203122.Sde_0774"/>
<dbReference type="GeneID" id="98612459"/>
<dbReference type="KEGG" id="sde:Sde_0774"/>
<dbReference type="eggNOG" id="COG2160">
    <property type="taxonomic scope" value="Bacteria"/>
</dbReference>
<dbReference type="HOGENOM" id="CLU_045663_0_0_6"/>
<dbReference type="OrthoDB" id="9765600at2"/>
<dbReference type="UniPathway" id="UPA00145">
    <property type="reaction ID" value="UER00565"/>
</dbReference>
<dbReference type="Proteomes" id="UP000001947">
    <property type="component" value="Chromosome"/>
</dbReference>
<dbReference type="GO" id="GO:0005829">
    <property type="term" value="C:cytosol"/>
    <property type="evidence" value="ECO:0007669"/>
    <property type="project" value="TreeGrafter"/>
</dbReference>
<dbReference type="GO" id="GO:0008733">
    <property type="term" value="F:L-arabinose isomerase activity"/>
    <property type="evidence" value="ECO:0007669"/>
    <property type="project" value="UniProtKB-UniRule"/>
</dbReference>
<dbReference type="GO" id="GO:0030145">
    <property type="term" value="F:manganese ion binding"/>
    <property type="evidence" value="ECO:0007669"/>
    <property type="project" value="UniProtKB-UniRule"/>
</dbReference>
<dbReference type="GO" id="GO:0019569">
    <property type="term" value="P:L-arabinose catabolic process to xylulose 5-phosphate"/>
    <property type="evidence" value="ECO:0007669"/>
    <property type="project" value="UniProtKB-UniRule"/>
</dbReference>
<dbReference type="Gene3D" id="3.40.50.10940">
    <property type="match status" value="1"/>
</dbReference>
<dbReference type="HAMAP" id="MF_00519">
    <property type="entry name" value="Arabinose_Isome"/>
    <property type="match status" value="1"/>
</dbReference>
<dbReference type="InterPro" id="IPR024664">
    <property type="entry name" value="Ara_Isoase_C"/>
</dbReference>
<dbReference type="InterPro" id="IPR055390">
    <property type="entry name" value="AraA_central"/>
</dbReference>
<dbReference type="InterPro" id="IPR055389">
    <property type="entry name" value="AraA_N"/>
</dbReference>
<dbReference type="InterPro" id="IPR038583">
    <property type="entry name" value="AraA_N_sf"/>
</dbReference>
<dbReference type="InterPro" id="IPR004216">
    <property type="entry name" value="Fuc/Ara_isomerase_C"/>
</dbReference>
<dbReference type="InterPro" id="IPR009015">
    <property type="entry name" value="Fucose_isomerase_N/cen_sf"/>
</dbReference>
<dbReference type="InterPro" id="IPR003762">
    <property type="entry name" value="Lara_isomerase"/>
</dbReference>
<dbReference type="NCBIfam" id="NF002795">
    <property type="entry name" value="PRK02929.1"/>
    <property type="match status" value="1"/>
</dbReference>
<dbReference type="PANTHER" id="PTHR38464">
    <property type="entry name" value="L-ARABINOSE ISOMERASE"/>
    <property type="match status" value="1"/>
</dbReference>
<dbReference type="PANTHER" id="PTHR38464:SF1">
    <property type="entry name" value="L-ARABINOSE ISOMERASE"/>
    <property type="match status" value="1"/>
</dbReference>
<dbReference type="Pfam" id="PF24856">
    <property type="entry name" value="AraA_central"/>
    <property type="match status" value="1"/>
</dbReference>
<dbReference type="Pfam" id="PF02610">
    <property type="entry name" value="AraA_N"/>
    <property type="match status" value="1"/>
</dbReference>
<dbReference type="Pfam" id="PF11762">
    <property type="entry name" value="Arabinose_Iso_C"/>
    <property type="match status" value="1"/>
</dbReference>
<dbReference type="PIRSF" id="PIRSF001478">
    <property type="entry name" value="L-ara_isomerase"/>
    <property type="match status" value="1"/>
</dbReference>
<dbReference type="SUPFAM" id="SSF50443">
    <property type="entry name" value="FucI/AraA C-terminal domain-like"/>
    <property type="match status" value="1"/>
</dbReference>
<dbReference type="SUPFAM" id="SSF53743">
    <property type="entry name" value="FucI/AraA N-terminal and middle domains"/>
    <property type="match status" value="1"/>
</dbReference>
<name>ARAA_SACD2</name>
<accession>Q21MP3</accession>
<evidence type="ECO:0000255" key="1">
    <source>
        <dbReference type="HAMAP-Rule" id="MF_00519"/>
    </source>
</evidence>
<sequence>MKIYGEKKIWFVTGSQHLYGPGVLAQVAENSQAIAAGLTASEHVSANIESRGVVTTPKEILDVCQAANSDENCVGLILWMHTFSPAKMWIAGLSALNKPYMHLHTQFGAALPWGDINMNYMNLNQSAHGDREFGYIGTRLRQERKVVVGHWQKESVQIQVDDWVRAAMGWAESQTLKVARFGDNMRQVAVTEGDKVSAQIQFGYEVHAFGLGDLAKACEKITAEQITAQLELYKQDYEIDADVFTDVHSLEMLQNEARLELGMEAFLEEGNFKAFTNCFENLTGLSGLPGLATQRLMSKGYGYGGEGDWKTAAMCRIVKVMSLGKAAGTSFMEDYTYNFGDPDQVLGAHMLEVCPSISNEKPKVVVERHTIGIKKDIARLIFTGTPGPAINISTIDMGTRFRIIANEVDTVKPPQDLPNLPVAKALWEPRPSLEVAAAAWIHAGGAHHSVYTQGINLDQLNDFAEMAGVEMVVIGADTNVNEFKKELRFNAVYYHLSHGI</sequence>
<reference key="1">
    <citation type="journal article" date="2008" name="PLoS Genet.">
        <title>Complete genome sequence of the complex carbohydrate-degrading marine bacterium, Saccharophagus degradans strain 2-40 T.</title>
        <authorList>
            <person name="Weiner R.M."/>
            <person name="Taylor L.E. II"/>
            <person name="Henrissat B."/>
            <person name="Hauser L."/>
            <person name="Land M."/>
            <person name="Coutinho P.M."/>
            <person name="Rancurel C."/>
            <person name="Saunders E.H."/>
            <person name="Longmire A.G."/>
            <person name="Zhang H."/>
            <person name="Bayer E.A."/>
            <person name="Gilbert H.J."/>
            <person name="Larimer F."/>
            <person name="Zhulin I.B."/>
            <person name="Ekborg N.A."/>
            <person name="Lamed R."/>
            <person name="Richardson P.M."/>
            <person name="Borovok I."/>
            <person name="Hutcheson S."/>
        </authorList>
    </citation>
    <scope>NUCLEOTIDE SEQUENCE [LARGE SCALE GENOMIC DNA]</scope>
    <source>
        <strain>2-40 / ATCC 43961 / DSM 17024</strain>
    </source>
</reference>
<proteinExistence type="inferred from homology"/>
<feature type="chain" id="PRO_0000312616" description="L-arabinose isomerase">
    <location>
        <begin position="1"/>
        <end position="500"/>
    </location>
</feature>
<feature type="binding site" evidence="1">
    <location>
        <position position="306"/>
    </location>
    <ligand>
        <name>Mn(2+)</name>
        <dbReference type="ChEBI" id="CHEBI:29035"/>
    </ligand>
</feature>
<feature type="binding site" evidence="1">
    <location>
        <position position="333"/>
    </location>
    <ligand>
        <name>Mn(2+)</name>
        <dbReference type="ChEBI" id="CHEBI:29035"/>
    </ligand>
</feature>
<feature type="binding site" evidence="1">
    <location>
        <position position="349"/>
    </location>
    <ligand>
        <name>Mn(2+)</name>
        <dbReference type="ChEBI" id="CHEBI:29035"/>
    </ligand>
</feature>
<feature type="binding site" evidence="1">
    <location>
        <position position="448"/>
    </location>
    <ligand>
        <name>Mn(2+)</name>
        <dbReference type="ChEBI" id="CHEBI:29035"/>
    </ligand>
</feature>